<evidence type="ECO:0000255" key="1">
    <source>
        <dbReference type="HAMAP-Rule" id="MF_01320"/>
    </source>
</evidence>
<evidence type="ECO:0000256" key="2">
    <source>
        <dbReference type="SAM" id="MobiDB-lite"/>
    </source>
</evidence>
<evidence type="ECO:0000305" key="3"/>
<protein>
    <recommendedName>
        <fullName evidence="1">Large ribosomal subunit protein uL2</fullName>
    </recommendedName>
    <alternativeName>
        <fullName evidence="3">50S ribosomal protein L2</fullName>
    </alternativeName>
</protein>
<dbReference type="EMBL" id="CP000921">
    <property type="protein sequence ID" value="ACO23337.1"/>
    <property type="molecule type" value="Genomic_DNA"/>
</dbReference>
<dbReference type="RefSeq" id="WP_000512911.1">
    <property type="nucleotide sequence ID" value="NC_012469.1"/>
</dbReference>
<dbReference type="SMR" id="C1CP91"/>
<dbReference type="GeneID" id="93738960"/>
<dbReference type="KEGG" id="snt:SPT_0259"/>
<dbReference type="HOGENOM" id="CLU_036235_2_1_9"/>
<dbReference type="GO" id="GO:0015934">
    <property type="term" value="C:large ribosomal subunit"/>
    <property type="evidence" value="ECO:0007669"/>
    <property type="project" value="InterPro"/>
</dbReference>
<dbReference type="GO" id="GO:0019843">
    <property type="term" value="F:rRNA binding"/>
    <property type="evidence" value="ECO:0007669"/>
    <property type="project" value="UniProtKB-UniRule"/>
</dbReference>
<dbReference type="GO" id="GO:0003735">
    <property type="term" value="F:structural constituent of ribosome"/>
    <property type="evidence" value="ECO:0007669"/>
    <property type="project" value="InterPro"/>
</dbReference>
<dbReference type="GO" id="GO:0016740">
    <property type="term" value="F:transferase activity"/>
    <property type="evidence" value="ECO:0007669"/>
    <property type="project" value="InterPro"/>
</dbReference>
<dbReference type="GO" id="GO:0002181">
    <property type="term" value="P:cytoplasmic translation"/>
    <property type="evidence" value="ECO:0007669"/>
    <property type="project" value="TreeGrafter"/>
</dbReference>
<dbReference type="FunFam" id="2.30.30.30:FF:000001">
    <property type="entry name" value="50S ribosomal protein L2"/>
    <property type="match status" value="1"/>
</dbReference>
<dbReference type="FunFam" id="2.40.50.140:FF:000003">
    <property type="entry name" value="50S ribosomal protein L2"/>
    <property type="match status" value="1"/>
</dbReference>
<dbReference type="FunFam" id="4.10.950.10:FF:000001">
    <property type="entry name" value="50S ribosomal protein L2"/>
    <property type="match status" value="1"/>
</dbReference>
<dbReference type="Gene3D" id="2.30.30.30">
    <property type="match status" value="1"/>
</dbReference>
<dbReference type="Gene3D" id="2.40.50.140">
    <property type="entry name" value="Nucleic acid-binding proteins"/>
    <property type="match status" value="1"/>
</dbReference>
<dbReference type="Gene3D" id="4.10.950.10">
    <property type="entry name" value="Ribosomal protein L2, domain 3"/>
    <property type="match status" value="1"/>
</dbReference>
<dbReference type="HAMAP" id="MF_01320_B">
    <property type="entry name" value="Ribosomal_uL2_B"/>
    <property type="match status" value="1"/>
</dbReference>
<dbReference type="InterPro" id="IPR012340">
    <property type="entry name" value="NA-bd_OB-fold"/>
</dbReference>
<dbReference type="InterPro" id="IPR014722">
    <property type="entry name" value="Rib_uL2_dom2"/>
</dbReference>
<dbReference type="InterPro" id="IPR002171">
    <property type="entry name" value="Ribosomal_uL2"/>
</dbReference>
<dbReference type="InterPro" id="IPR005880">
    <property type="entry name" value="Ribosomal_uL2_bac/org-type"/>
</dbReference>
<dbReference type="InterPro" id="IPR022669">
    <property type="entry name" value="Ribosomal_uL2_C"/>
</dbReference>
<dbReference type="InterPro" id="IPR022671">
    <property type="entry name" value="Ribosomal_uL2_CS"/>
</dbReference>
<dbReference type="InterPro" id="IPR014726">
    <property type="entry name" value="Ribosomal_uL2_dom3"/>
</dbReference>
<dbReference type="InterPro" id="IPR022666">
    <property type="entry name" value="Ribosomal_uL2_RNA-bd_dom"/>
</dbReference>
<dbReference type="InterPro" id="IPR008991">
    <property type="entry name" value="Translation_prot_SH3-like_sf"/>
</dbReference>
<dbReference type="NCBIfam" id="TIGR01171">
    <property type="entry name" value="rplB_bact"/>
    <property type="match status" value="1"/>
</dbReference>
<dbReference type="PANTHER" id="PTHR13691:SF5">
    <property type="entry name" value="LARGE RIBOSOMAL SUBUNIT PROTEIN UL2M"/>
    <property type="match status" value="1"/>
</dbReference>
<dbReference type="PANTHER" id="PTHR13691">
    <property type="entry name" value="RIBOSOMAL PROTEIN L2"/>
    <property type="match status" value="1"/>
</dbReference>
<dbReference type="Pfam" id="PF00181">
    <property type="entry name" value="Ribosomal_L2"/>
    <property type="match status" value="1"/>
</dbReference>
<dbReference type="Pfam" id="PF03947">
    <property type="entry name" value="Ribosomal_L2_C"/>
    <property type="match status" value="1"/>
</dbReference>
<dbReference type="PIRSF" id="PIRSF002158">
    <property type="entry name" value="Ribosomal_L2"/>
    <property type="match status" value="1"/>
</dbReference>
<dbReference type="SMART" id="SM01383">
    <property type="entry name" value="Ribosomal_L2"/>
    <property type="match status" value="1"/>
</dbReference>
<dbReference type="SMART" id="SM01382">
    <property type="entry name" value="Ribosomal_L2_C"/>
    <property type="match status" value="1"/>
</dbReference>
<dbReference type="SUPFAM" id="SSF50249">
    <property type="entry name" value="Nucleic acid-binding proteins"/>
    <property type="match status" value="1"/>
</dbReference>
<dbReference type="SUPFAM" id="SSF50104">
    <property type="entry name" value="Translation proteins SH3-like domain"/>
    <property type="match status" value="1"/>
</dbReference>
<dbReference type="PROSITE" id="PS00467">
    <property type="entry name" value="RIBOSOMAL_L2"/>
    <property type="match status" value="1"/>
</dbReference>
<comment type="function">
    <text evidence="1">One of the primary rRNA binding proteins. Required for association of the 30S and 50S subunits to form the 70S ribosome, for tRNA binding and peptide bond formation. It has been suggested to have peptidyltransferase activity; this is somewhat controversial. Makes several contacts with the 16S rRNA in the 70S ribosome.</text>
</comment>
<comment type="subunit">
    <text evidence="1">Part of the 50S ribosomal subunit. Forms a bridge to the 30S subunit in the 70S ribosome.</text>
</comment>
<comment type="similarity">
    <text evidence="1">Belongs to the universal ribosomal protein uL2 family.</text>
</comment>
<feature type="chain" id="PRO_1000165775" description="Large ribosomal subunit protein uL2">
    <location>
        <begin position="1"/>
        <end position="277"/>
    </location>
</feature>
<feature type="region of interest" description="Disordered" evidence="2">
    <location>
        <begin position="219"/>
        <end position="277"/>
    </location>
</feature>
<feature type="compositionally biased region" description="Basic and acidic residues" evidence="2">
    <location>
        <begin position="264"/>
        <end position="277"/>
    </location>
</feature>
<keyword id="KW-0687">Ribonucleoprotein</keyword>
<keyword id="KW-0689">Ribosomal protein</keyword>
<keyword id="KW-0694">RNA-binding</keyword>
<keyword id="KW-0699">rRNA-binding</keyword>
<reference key="1">
    <citation type="journal article" date="2010" name="Genome Biol.">
        <title>Structure and dynamics of the pan-genome of Streptococcus pneumoniae and closely related species.</title>
        <authorList>
            <person name="Donati C."/>
            <person name="Hiller N.L."/>
            <person name="Tettelin H."/>
            <person name="Muzzi A."/>
            <person name="Croucher N.J."/>
            <person name="Angiuoli S.V."/>
            <person name="Oggioni M."/>
            <person name="Dunning Hotopp J.C."/>
            <person name="Hu F.Z."/>
            <person name="Riley D.R."/>
            <person name="Covacci A."/>
            <person name="Mitchell T.J."/>
            <person name="Bentley S.D."/>
            <person name="Kilian M."/>
            <person name="Ehrlich G.D."/>
            <person name="Rappuoli R."/>
            <person name="Moxon E.R."/>
            <person name="Masignani V."/>
        </authorList>
    </citation>
    <scope>NUCLEOTIDE SEQUENCE [LARGE SCALE GENOMIC DNA]</scope>
    <source>
        <strain>Taiwan19F-14</strain>
    </source>
</reference>
<name>RL2_STRZT</name>
<sequence length="277" mass="29920">MGIRVYKPTTNGRRNMTSLDFAEITTSTPEKSLLVALKSKAGRNNNGRITVRHQGGGHKRFYRLVDFKRNKDNVEAVVKTIEYDPNRSANIALVHYTDGVKAYIIAPKGLEVGQRIVSGPEADIKVGNALPLANIPVGTLIHNIELKPGRGGELVRAAGASAQVLGSEGKYVLVRLQSGEVRMILGTCRATVGVVGNEQHGLVNLGKAGRSRWKGIRPTVRGSVMNPNDHPHGGGEGKAPVGRKAPSTPWGKPALGLKTRNKKAKSDKLIVRRRNEK</sequence>
<proteinExistence type="inferred from homology"/>
<accession>C1CP91</accession>
<gene>
    <name evidence="1" type="primary">rplB</name>
    <name type="ordered locus">SPT_0259</name>
</gene>
<organism>
    <name type="scientific">Streptococcus pneumoniae (strain Taiwan19F-14)</name>
    <dbReference type="NCBI Taxonomy" id="487213"/>
    <lineage>
        <taxon>Bacteria</taxon>
        <taxon>Bacillati</taxon>
        <taxon>Bacillota</taxon>
        <taxon>Bacilli</taxon>
        <taxon>Lactobacillales</taxon>
        <taxon>Streptococcaceae</taxon>
        <taxon>Streptococcus</taxon>
    </lineage>
</organism>